<proteinExistence type="inferred from homology"/>
<keyword id="KW-0004">4Fe-4S</keyword>
<keyword id="KW-0408">Iron</keyword>
<keyword id="KW-0411">Iron-sulfur</keyword>
<keyword id="KW-0472">Membrane</keyword>
<keyword id="KW-0479">Metal-binding</keyword>
<keyword id="KW-0520">NAD</keyword>
<keyword id="KW-0521">NADP</keyword>
<keyword id="KW-0618">Plastoquinone</keyword>
<keyword id="KW-0874">Quinone</keyword>
<keyword id="KW-0677">Repeat</keyword>
<keyword id="KW-0793">Thylakoid</keyword>
<keyword id="KW-1278">Translocase</keyword>
<dbReference type="EC" id="7.1.1.-" evidence="1"/>
<dbReference type="EMBL" id="BX569695">
    <property type="protein sequence ID" value="CAE08788.1"/>
    <property type="molecule type" value="Genomic_DNA"/>
</dbReference>
<dbReference type="RefSeq" id="WP_011129126.1">
    <property type="nucleotide sequence ID" value="NC_005070.1"/>
</dbReference>
<dbReference type="SMR" id="Q7U403"/>
<dbReference type="STRING" id="84588.SYNW2273"/>
<dbReference type="KEGG" id="syw:SYNW2273"/>
<dbReference type="eggNOG" id="COG1143">
    <property type="taxonomic scope" value="Bacteria"/>
</dbReference>
<dbReference type="HOGENOM" id="CLU_122804_0_0_3"/>
<dbReference type="BioCyc" id="MetaCyc:TX72_RS11465-MONOMER"/>
<dbReference type="Proteomes" id="UP000001422">
    <property type="component" value="Chromosome"/>
</dbReference>
<dbReference type="GO" id="GO:0031676">
    <property type="term" value="C:plasma membrane-derived thylakoid membrane"/>
    <property type="evidence" value="ECO:0007669"/>
    <property type="project" value="UniProtKB-SubCell"/>
</dbReference>
<dbReference type="GO" id="GO:0051539">
    <property type="term" value="F:4 iron, 4 sulfur cluster binding"/>
    <property type="evidence" value="ECO:0007669"/>
    <property type="project" value="UniProtKB-KW"/>
</dbReference>
<dbReference type="GO" id="GO:0005506">
    <property type="term" value="F:iron ion binding"/>
    <property type="evidence" value="ECO:0007669"/>
    <property type="project" value="UniProtKB-UniRule"/>
</dbReference>
<dbReference type="GO" id="GO:0008137">
    <property type="term" value="F:NADH dehydrogenase (ubiquinone) activity"/>
    <property type="evidence" value="ECO:0007669"/>
    <property type="project" value="InterPro"/>
</dbReference>
<dbReference type="GO" id="GO:0048038">
    <property type="term" value="F:quinone binding"/>
    <property type="evidence" value="ECO:0007669"/>
    <property type="project" value="UniProtKB-KW"/>
</dbReference>
<dbReference type="GO" id="GO:0019684">
    <property type="term" value="P:photosynthesis, light reaction"/>
    <property type="evidence" value="ECO:0007669"/>
    <property type="project" value="UniProtKB-UniRule"/>
</dbReference>
<dbReference type="Gene3D" id="3.30.70.3270">
    <property type="match status" value="1"/>
</dbReference>
<dbReference type="HAMAP" id="MF_01351">
    <property type="entry name" value="NDH1_NuoI"/>
    <property type="match status" value="1"/>
</dbReference>
<dbReference type="InterPro" id="IPR017896">
    <property type="entry name" value="4Fe4S_Fe-S-bd"/>
</dbReference>
<dbReference type="InterPro" id="IPR017900">
    <property type="entry name" value="4Fe4S_Fe_S_CS"/>
</dbReference>
<dbReference type="InterPro" id="IPR010226">
    <property type="entry name" value="NADH_quinone_OxRdtase_chainI"/>
</dbReference>
<dbReference type="InterPro" id="IPR004497">
    <property type="entry name" value="NDHI"/>
</dbReference>
<dbReference type="NCBIfam" id="TIGR00403">
    <property type="entry name" value="ndhI"/>
    <property type="match status" value="1"/>
</dbReference>
<dbReference type="NCBIfam" id="TIGR01971">
    <property type="entry name" value="NuoI"/>
    <property type="match status" value="1"/>
</dbReference>
<dbReference type="NCBIfam" id="NF004537">
    <property type="entry name" value="PRK05888.1-3"/>
    <property type="match status" value="1"/>
</dbReference>
<dbReference type="PANTHER" id="PTHR47275">
    <property type="entry name" value="NAD(P)H-QUINONE OXIDOREDUCTASE SUBUNIT I, CHLOROPLASTIC"/>
    <property type="match status" value="1"/>
</dbReference>
<dbReference type="PANTHER" id="PTHR47275:SF1">
    <property type="entry name" value="NAD(P)H-QUINONE OXIDOREDUCTASE SUBUNIT I, CHLOROPLASTIC"/>
    <property type="match status" value="1"/>
</dbReference>
<dbReference type="Pfam" id="PF12838">
    <property type="entry name" value="Fer4_7"/>
    <property type="match status" value="1"/>
</dbReference>
<dbReference type="SUPFAM" id="SSF54862">
    <property type="entry name" value="4Fe-4S ferredoxins"/>
    <property type="match status" value="1"/>
</dbReference>
<dbReference type="PROSITE" id="PS00198">
    <property type="entry name" value="4FE4S_FER_1"/>
    <property type="match status" value="2"/>
</dbReference>
<dbReference type="PROSITE" id="PS51379">
    <property type="entry name" value="4FE4S_FER_2"/>
    <property type="match status" value="2"/>
</dbReference>
<feature type="chain" id="PRO_0000245693" description="NAD(P)H-quinone oxidoreductase subunit I">
    <location>
        <begin position="1"/>
        <end position="215"/>
    </location>
</feature>
<feature type="domain" description="4Fe-4S ferredoxin-type 1" evidence="1">
    <location>
        <begin position="55"/>
        <end position="84"/>
    </location>
</feature>
<feature type="domain" description="4Fe-4S ferredoxin-type 2" evidence="1">
    <location>
        <begin position="95"/>
        <end position="124"/>
    </location>
</feature>
<feature type="region of interest" description="Disordered" evidence="2">
    <location>
        <begin position="166"/>
        <end position="215"/>
    </location>
</feature>
<feature type="compositionally biased region" description="Basic and acidic residues" evidence="2">
    <location>
        <begin position="169"/>
        <end position="180"/>
    </location>
</feature>
<feature type="compositionally biased region" description="Polar residues" evidence="2">
    <location>
        <begin position="203"/>
        <end position="215"/>
    </location>
</feature>
<feature type="binding site" evidence="1">
    <location>
        <position position="64"/>
    </location>
    <ligand>
        <name>[4Fe-4S] cluster</name>
        <dbReference type="ChEBI" id="CHEBI:49883"/>
        <label>1</label>
    </ligand>
</feature>
<feature type="binding site" evidence="1">
    <location>
        <position position="67"/>
    </location>
    <ligand>
        <name>[4Fe-4S] cluster</name>
        <dbReference type="ChEBI" id="CHEBI:49883"/>
        <label>1</label>
    </ligand>
</feature>
<feature type="binding site" evidence="1">
    <location>
        <position position="70"/>
    </location>
    <ligand>
        <name>[4Fe-4S] cluster</name>
        <dbReference type="ChEBI" id="CHEBI:49883"/>
        <label>1</label>
    </ligand>
</feature>
<feature type="binding site" evidence="1">
    <location>
        <position position="74"/>
    </location>
    <ligand>
        <name>[4Fe-4S] cluster</name>
        <dbReference type="ChEBI" id="CHEBI:49883"/>
        <label>2</label>
    </ligand>
</feature>
<feature type="binding site" evidence="1">
    <location>
        <position position="104"/>
    </location>
    <ligand>
        <name>[4Fe-4S] cluster</name>
        <dbReference type="ChEBI" id="CHEBI:49883"/>
        <label>2</label>
    </ligand>
</feature>
<feature type="binding site" evidence="1">
    <location>
        <position position="107"/>
    </location>
    <ligand>
        <name>[4Fe-4S] cluster</name>
        <dbReference type="ChEBI" id="CHEBI:49883"/>
        <label>2</label>
    </ligand>
</feature>
<feature type="binding site" evidence="1">
    <location>
        <position position="110"/>
    </location>
    <ligand>
        <name>[4Fe-4S] cluster</name>
        <dbReference type="ChEBI" id="CHEBI:49883"/>
        <label>2</label>
    </ligand>
</feature>
<feature type="binding site" evidence="1">
    <location>
        <position position="114"/>
    </location>
    <ligand>
        <name>[4Fe-4S] cluster</name>
        <dbReference type="ChEBI" id="CHEBI:49883"/>
        <label>1</label>
    </ligand>
</feature>
<sequence length="215" mass="24059">MFGFLKQVGDYTRDAVDAARNLAQGFSVTFDHMKRRPVTVQYPYEKLIPSERYRGRIHYEFDKCIACEVCVRVCPINLPVVDWVMNKATKKKELRNYSIDFGVCIFCGNCVEYCPTNCLSMTEEYELAAFDRHSLNYDNVALGRLPTSVTTDPSVQPLRELAYLPAGEMDPHGVPNDRPRAGQLPSQVLETLAPPAKVGAKNEGQSTGTTQEGEA</sequence>
<accession>Q7U403</accession>
<name>NDHI_PARMW</name>
<evidence type="ECO:0000255" key="1">
    <source>
        <dbReference type="HAMAP-Rule" id="MF_01351"/>
    </source>
</evidence>
<evidence type="ECO:0000256" key="2">
    <source>
        <dbReference type="SAM" id="MobiDB-lite"/>
    </source>
</evidence>
<protein>
    <recommendedName>
        <fullName evidence="1">NAD(P)H-quinone oxidoreductase subunit I</fullName>
        <ecNumber evidence="1">7.1.1.-</ecNumber>
    </recommendedName>
    <alternativeName>
        <fullName evidence="1">NAD(P)H dehydrogenase I subunit I</fullName>
    </alternativeName>
    <alternativeName>
        <fullName evidence="1">NDH-1 subunit I</fullName>
        <shortName evidence="1">NDH-I</shortName>
    </alternativeName>
</protein>
<comment type="function">
    <text evidence="1">NDH-1 shuttles electrons from an unknown electron donor, via FMN and iron-sulfur (Fe-S) centers, to quinones in the respiratory and/or the photosynthetic chain. The immediate electron acceptor for the enzyme in this species is believed to be plastoquinone. Couples the redox reaction to proton translocation, and thus conserves the redox energy in a proton gradient.</text>
</comment>
<comment type="catalytic activity">
    <reaction evidence="1">
        <text>a plastoquinone + NADH + (n+1) H(+)(in) = a plastoquinol + NAD(+) + n H(+)(out)</text>
        <dbReference type="Rhea" id="RHEA:42608"/>
        <dbReference type="Rhea" id="RHEA-COMP:9561"/>
        <dbReference type="Rhea" id="RHEA-COMP:9562"/>
        <dbReference type="ChEBI" id="CHEBI:15378"/>
        <dbReference type="ChEBI" id="CHEBI:17757"/>
        <dbReference type="ChEBI" id="CHEBI:57540"/>
        <dbReference type="ChEBI" id="CHEBI:57945"/>
        <dbReference type="ChEBI" id="CHEBI:62192"/>
    </reaction>
</comment>
<comment type="catalytic activity">
    <reaction evidence="1">
        <text>a plastoquinone + NADPH + (n+1) H(+)(in) = a plastoquinol + NADP(+) + n H(+)(out)</text>
        <dbReference type="Rhea" id="RHEA:42612"/>
        <dbReference type="Rhea" id="RHEA-COMP:9561"/>
        <dbReference type="Rhea" id="RHEA-COMP:9562"/>
        <dbReference type="ChEBI" id="CHEBI:15378"/>
        <dbReference type="ChEBI" id="CHEBI:17757"/>
        <dbReference type="ChEBI" id="CHEBI:57783"/>
        <dbReference type="ChEBI" id="CHEBI:58349"/>
        <dbReference type="ChEBI" id="CHEBI:62192"/>
    </reaction>
</comment>
<comment type="cofactor">
    <cofactor evidence="1">
        <name>[4Fe-4S] cluster</name>
        <dbReference type="ChEBI" id="CHEBI:49883"/>
    </cofactor>
    <text evidence="1">Binds 2 [4Fe-4S] clusters per subunit.</text>
</comment>
<comment type="subunit">
    <text evidence="1">NDH-1 is composed of at least 11 different subunits.</text>
</comment>
<comment type="subcellular location">
    <subcellularLocation>
        <location evidence="1">Cellular thylakoid membrane</location>
        <topology evidence="1">Peripheral membrane protein</topology>
    </subcellularLocation>
</comment>
<comment type="similarity">
    <text evidence="1">Belongs to the complex I 23 kDa subunit family.</text>
</comment>
<reference key="1">
    <citation type="journal article" date="2003" name="Nature">
        <title>The genome of a motile marine Synechococcus.</title>
        <authorList>
            <person name="Palenik B."/>
            <person name="Brahamsha B."/>
            <person name="Larimer F.W."/>
            <person name="Land M.L."/>
            <person name="Hauser L."/>
            <person name="Chain P."/>
            <person name="Lamerdin J.E."/>
            <person name="Regala W."/>
            <person name="Allen E.E."/>
            <person name="McCarren J."/>
            <person name="Paulsen I.T."/>
            <person name="Dufresne A."/>
            <person name="Partensky F."/>
            <person name="Webb E.A."/>
            <person name="Waterbury J."/>
        </authorList>
    </citation>
    <scope>NUCLEOTIDE SEQUENCE [LARGE SCALE GENOMIC DNA]</scope>
    <source>
        <strain>WH8102</strain>
    </source>
</reference>
<gene>
    <name evidence="1" type="primary">ndhI</name>
    <name type="ordered locus">SYNW2273</name>
</gene>
<organism>
    <name type="scientific">Parasynechococcus marenigrum (strain WH8102)</name>
    <dbReference type="NCBI Taxonomy" id="84588"/>
    <lineage>
        <taxon>Bacteria</taxon>
        <taxon>Bacillati</taxon>
        <taxon>Cyanobacteriota</taxon>
        <taxon>Cyanophyceae</taxon>
        <taxon>Synechococcales</taxon>
        <taxon>Prochlorococcaceae</taxon>
        <taxon>Parasynechococcus</taxon>
        <taxon>Parasynechococcus marenigrum</taxon>
    </lineage>
</organism>